<name>RS5_GLUOX</name>
<sequence>MAREPREGGRGGREREQGDDLVDKLVTINRVAKVVKGGRRFAFAALVVVGDQKGRVGYGAGKAREVPEAIRKATERAKRTMIRVPMKEGRTLHHDTFGHYGAGKVVVRAAEAGTGIIAGGPMRAVFESLGVNDVVAKSLGTRNPHNMIKATFAALEKASSPRHVASRRGKKAAELFGKREQGQTEAEVTNG</sequence>
<accession>Q5FU00</accession>
<dbReference type="EMBL" id="CP000009">
    <property type="protein sequence ID" value="AAW60146.1"/>
    <property type="molecule type" value="Genomic_DNA"/>
</dbReference>
<dbReference type="RefSeq" id="WP_011251949.1">
    <property type="nucleotide sequence ID" value="NZ_LT900338.1"/>
</dbReference>
<dbReference type="SMR" id="Q5FU00"/>
<dbReference type="STRING" id="290633.GOX0363"/>
<dbReference type="GeneID" id="56904629"/>
<dbReference type="KEGG" id="gox:GOX0363"/>
<dbReference type="eggNOG" id="COG0098">
    <property type="taxonomic scope" value="Bacteria"/>
</dbReference>
<dbReference type="HOGENOM" id="CLU_065898_2_2_5"/>
<dbReference type="Proteomes" id="UP000006375">
    <property type="component" value="Chromosome"/>
</dbReference>
<dbReference type="GO" id="GO:0015935">
    <property type="term" value="C:small ribosomal subunit"/>
    <property type="evidence" value="ECO:0007669"/>
    <property type="project" value="InterPro"/>
</dbReference>
<dbReference type="GO" id="GO:0019843">
    <property type="term" value="F:rRNA binding"/>
    <property type="evidence" value="ECO:0007669"/>
    <property type="project" value="UniProtKB-UniRule"/>
</dbReference>
<dbReference type="GO" id="GO:0003735">
    <property type="term" value="F:structural constituent of ribosome"/>
    <property type="evidence" value="ECO:0007669"/>
    <property type="project" value="InterPro"/>
</dbReference>
<dbReference type="GO" id="GO:0006412">
    <property type="term" value="P:translation"/>
    <property type="evidence" value="ECO:0007669"/>
    <property type="project" value="UniProtKB-UniRule"/>
</dbReference>
<dbReference type="FunFam" id="3.30.160.20:FF:000001">
    <property type="entry name" value="30S ribosomal protein S5"/>
    <property type="match status" value="1"/>
</dbReference>
<dbReference type="FunFam" id="3.30.230.10:FF:000002">
    <property type="entry name" value="30S ribosomal protein S5"/>
    <property type="match status" value="1"/>
</dbReference>
<dbReference type="Gene3D" id="3.30.160.20">
    <property type="match status" value="1"/>
</dbReference>
<dbReference type="Gene3D" id="3.30.230.10">
    <property type="match status" value="1"/>
</dbReference>
<dbReference type="HAMAP" id="MF_01307_B">
    <property type="entry name" value="Ribosomal_uS5_B"/>
    <property type="match status" value="1"/>
</dbReference>
<dbReference type="InterPro" id="IPR020568">
    <property type="entry name" value="Ribosomal_Su5_D2-typ_SF"/>
</dbReference>
<dbReference type="InterPro" id="IPR000851">
    <property type="entry name" value="Ribosomal_uS5"/>
</dbReference>
<dbReference type="InterPro" id="IPR005712">
    <property type="entry name" value="Ribosomal_uS5_bac-type"/>
</dbReference>
<dbReference type="InterPro" id="IPR005324">
    <property type="entry name" value="Ribosomal_uS5_C"/>
</dbReference>
<dbReference type="InterPro" id="IPR013810">
    <property type="entry name" value="Ribosomal_uS5_N"/>
</dbReference>
<dbReference type="InterPro" id="IPR018192">
    <property type="entry name" value="Ribosomal_uS5_N_CS"/>
</dbReference>
<dbReference type="InterPro" id="IPR014721">
    <property type="entry name" value="Ribsml_uS5_D2-typ_fold_subgr"/>
</dbReference>
<dbReference type="NCBIfam" id="TIGR01021">
    <property type="entry name" value="rpsE_bact"/>
    <property type="match status" value="1"/>
</dbReference>
<dbReference type="PANTHER" id="PTHR48277">
    <property type="entry name" value="MITOCHONDRIAL RIBOSOMAL PROTEIN S5"/>
    <property type="match status" value="1"/>
</dbReference>
<dbReference type="PANTHER" id="PTHR48277:SF1">
    <property type="entry name" value="MITOCHONDRIAL RIBOSOMAL PROTEIN S5"/>
    <property type="match status" value="1"/>
</dbReference>
<dbReference type="Pfam" id="PF00333">
    <property type="entry name" value="Ribosomal_S5"/>
    <property type="match status" value="1"/>
</dbReference>
<dbReference type="Pfam" id="PF03719">
    <property type="entry name" value="Ribosomal_S5_C"/>
    <property type="match status" value="1"/>
</dbReference>
<dbReference type="SUPFAM" id="SSF54768">
    <property type="entry name" value="dsRNA-binding domain-like"/>
    <property type="match status" value="1"/>
</dbReference>
<dbReference type="SUPFAM" id="SSF54211">
    <property type="entry name" value="Ribosomal protein S5 domain 2-like"/>
    <property type="match status" value="1"/>
</dbReference>
<dbReference type="PROSITE" id="PS00585">
    <property type="entry name" value="RIBOSOMAL_S5"/>
    <property type="match status" value="1"/>
</dbReference>
<dbReference type="PROSITE" id="PS50881">
    <property type="entry name" value="S5_DSRBD"/>
    <property type="match status" value="1"/>
</dbReference>
<comment type="function">
    <text evidence="1">With S4 and S12 plays an important role in translational accuracy.</text>
</comment>
<comment type="function">
    <text evidence="1">Located at the back of the 30S subunit body where it stabilizes the conformation of the head with respect to the body.</text>
</comment>
<comment type="subunit">
    <text evidence="1">Part of the 30S ribosomal subunit. Contacts proteins S4 and S8.</text>
</comment>
<comment type="domain">
    <text>The N-terminal domain interacts with the head of the 30S subunit; the C-terminal domain interacts with the body and contacts protein S4. The interaction surface between S4 and S5 is involved in control of translational fidelity.</text>
</comment>
<comment type="similarity">
    <text evidence="1">Belongs to the universal ribosomal protein uS5 family.</text>
</comment>
<feature type="chain" id="PRO_0000131521" description="Small ribosomal subunit protein uS5">
    <location>
        <begin position="1"/>
        <end position="191"/>
    </location>
</feature>
<feature type="domain" description="S5 DRBM" evidence="1">
    <location>
        <begin position="21"/>
        <end position="84"/>
    </location>
</feature>
<feature type="region of interest" description="Disordered" evidence="2">
    <location>
        <begin position="161"/>
        <end position="191"/>
    </location>
</feature>
<feature type="compositionally biased region" description="Basic and acidic residues" evidence="2">
    <location>
        <begin position="171"/>
        <end position="182"/>
    </location>
</feature>
<keyword id="KW-1185">Reference proteome</keyword>
<keyword id="KW-0687">Ribonucleoprotein</keyword>
<keyword id="KW-0689">Ribosomal protein</keyword>
<keyword id="KW-0694">RNA-binding</keyword>
<keyword id="KW-0699">rRNA-binding</keyword>
<reference key="1">
    <citation type="journal article" date="2005" name="Nat. Biotechnol.">
        <title>Complete genome sequence of the acetic acid bacterium Gluconobacter oxydans.</title>
        <authorList>
            <person name="Prust C."/>
            <person name="Hoffmeister M."/>
            <person name="Liesegang H."/>
            <person name="Wiezer A."/>
            <person name="Fricke W.F."/>
            <person name="Ehrenreich A."/>
            <person name="Gottschalk G."/>
            <person name="Deppenmeier U."/>
        </authorList>
    </citation>
    <scope>NUCLEOTIDE SEQUENCE [LARGE SCALE GENOMIC DNA]</scope>
    <source>
        <strain>621H</strain>
    </source>
</reference>
<organism>
    <name type="scientific">Gluconobacter oxydans (strain 621H)</name>
    <name type="common">Gluconobacter suboxydans</name>
    <dbReference type="NCBI Taxonomy" id="290633"/>
    <lineage>
        <taxon>Bacteria</taxon>
        <taxon>Pseudomonadati</taxon>
        <taxon>Pseudomonadota</taxon>
        <taxon>Alphaproteobacteria</taxon>
        <taxon>Acetobacterales</taxon>
        <taxon>Acetobacteraceae</taxon>
        <taxon>Gluconobacter</taxon>
    </lineage>
</organism>
<protein>
    <recommendedName>
        <fullName evidence="1">Small ribosomal subunit protein uS5</fullName>
    </recommendedName>
    <alternativeName>
        <fullName evidence="3">30S ribosomal protein S5</fullName>
    </alternativeName>
</protein>
<proteinExistence type="inferred from homology"/>
<gene>
    <name evidence="1" type="primary">rpsE</name>
    <name type="ordered locus">GOX0363</name>
</gene>
<evidence type="ECO:0000255" key="1">
    <source>
        <dbReference type="HAMAP-Rule" id="MF_01307"/>
    </source>
</evidence>
<evidence type="ECO:0000256" key="2">
    <source>
        <dbReference type="SAM" id="MobiDB-lite"/>
    </source>
</evidence>
<evidence type="ECO:0000305" key="3"/>